<proteinExistence type="evidence at transcript level"/>
<dbReference type="EMBL" id="S45035">
    <property type="protein sequence ID" value="AAB23483.1"/>
    <property type="molecule type" value="Genomic_DNA"/>
</dbReference>
<dbReference type="PIR" id="JQ1092">
    <property type="entry name" value="JQ1092"/>
</dbReference>
<dbReference type="SMR" id="P25273"/>
<dbReference type="STRING" id="3847.P25273"/>
<dbReference type="MEROPS" id="I03.001"/>
<dbReference type="InParanoid" id="P25273"/>
<dbReference type="Proteomes" id="UP000008827">
    <property type="component" value="Unplaced"/>
</dbReference>
<dbReference type="GO" id="GO:0004867">
    <property type="term" value="F:serine-type endopeptidase inhibitor activity"/>
    <property type="evidence" value="ECO:0007669"/>
    <property type="project" value="UniProtKB-KW"/>
</dbReference>
<dbReference type="CDD" id="cd23363">
    <property type="entry name" value="beta-trefoil_STI_SKTI"/>
    <property type="match status" value="1"/>
</dbReference>
<dbReference type="Gene3D" id="2.80.10.50">
    <property type="match status" value="1"/>
</dbReference>
<dbReference type="InterPro" id="IPR011065">
    <property type="entry name" value="Kunitz_inhibitor_STI-like_sf"/>
</dbReference>
<dbReference type="InterPro" id="IPR002160">
    <property type="entry name" value="Prot_inh_Kunz-lg"/>
</dbReference>
<dbReference type="PANTHER" id="PTHR33107">
    <property type="entry name" value="KUNITZ TRYPSIN INHIBITOR 2"/>
    <property type="match status" value="1"/>
</dbReference>
<dbReference type="PANTHER" id="PTHR33107:SF81">
    <property type="entry name" value="TRYPSIN INHIBITOR A"/>
    <property type="match status" value="1"/>
</dbReference>
<dbReference type="Pfam" id="PF00197">
    <property type="entry name" value="Kunitz_legume"/>
    <property type="match status" value="1"/>
</dbReference>
<dbReference type="PRINTS" id="PR00291">
    <property type="entry name" value="KUNITZINHBTR"/>
</dbReference>
<dbReference type="SMART" id="SM00452">
    <property type="entry name" value="STI"/>
    <property type="match status" value="1"/>
</dbReference>
<dbReference type="SUPFAM" id="SSF50386">
    <property type="entry name" value="STI-like"/>
    <property type="match status" value="1"/>
</dbReference>
<dbReference type="PROSITE" id="PS00283">
    <property type="entry name" value="SOYBEAN_KUNITZ"/>
    <property type="match status" value="1"/>
</dbReference>
<name>KTI2_SOYBN</name>
<accession>P25273</accession>
<evidence type="ECO:0000250" key="1"/>
<evidence type="ECO:0000255" key="2"/>
<evidence type="ECO:0000305" key="3"/>
<gene>
    <name type="primary">KTI2</name>
</gene>
<feature type="signal peptide" evidence="2">
    <location>
        <begin position="1"/>
        <end position="25"/>
    </location>
</feature>
<feature type="chain" id="PRO_0000016892" description="Kunitz-type trypsin inhibitor KTI2">
    <location>
        <begin position="26"/>
        <end position="204"/>
    </location>
</feature>
<feature type="disulfide bond" evidence="1">
    <location>
        <begin position="65"/>
        <end position="112"/>
    </location>
</feature>
<feature type="disulfide bond" evidence="1">
    <location>
        <begin position="160"/>
        <end position="169"/>
    </location>
</feature>
<sequence>MKSTIFFALFLVCAFTISYLPSATAQFVLDTDDDPLQNGGTYYMLPVMRGKSGGIEGNSTGKEICPLTVVQSPNKHNKGIGLVFKSPLHALFIAERYPLSIKFDSFAVIPLCGVMPTKWAIVEREGLQAVTLAARDTVDGWFNIERVSREYNDYYKLVFCPQEAEDNKCEDIGIQIDNDGIRRLVLSKNKPLVVEFQKFRSSTA</sequence>
<protein>
    <recommendedName>
        <fullName>Kunitz-type trypsin inhibitor KTI2</fullName>
    </recommendedName>
</protein>
<comment type="function">
    <text>Has probably no trypsin inhibitor activity. KTi2 is responsible for most of the Kunitz trypsin inhibitor activity and protein found in soybean seeds.</text>
</comment>
<comment type="tissue specificity">
    <text>Seed, and at low levels in leaf, root, and stem.</text>
</comment>
<comment type="developmental stage">
    <text>Expressed during embryogenesis and in mature plant.</text>
</comment>
<comment type="similarity">
    <text evidence="3">Belongs to the protease inhibitor I3 (leguminous Kunitz-type inhibitor) family.</text>
</comment>
<reference key="1">
    <citation type="journal article" date="1989" name="Plant Cell">
        <title>Kunitz trypsin inhibitor genes are differentially expressed during the soybean life cycle and in transformed tobacco plants.</title>
        <authorList>
            <person name="Jofuku K.D."/>
            <person name="Goldberg R.B."/>
        </authorList>
    </citation>
    <scope>NUCLEOTIDE SEQUENCE [GENOMIC DNA]</scope>
    <source>
        <strain>cv. Forrest</strain>
    </source>
</reference>
<keyword id="KW-1015">Disulfide bond</keyword>
<keyword id="KW-0646">Protease inhibitor</keyword>
<keyword id="KW-1185">Reference proteome</keyword>
<keyword id="KW-0722">Serine protease inhibitor</keyword>
<keyword id="KW-0732">Signal</keyword>
<organism>
    <name type="scientific">Glycine max</name>
    <name type="common">Soybean</name>
    <name type="synonym">Glycine hispida</name>
    <dbReference type="NCBI Taxonomy" id="3847"/>
    <lineage>
        <taxon>Eukaryota</taxon>
        <taxon>Viridiplantae</taxon>
        <taxon>Streptophyta</taxon>
        <taxon>Embryophyta</taxon>
        <taxon>Tracheophyta</taxon>
        <taxon>Spermatophyta</taxon>
        <taxon>Magnoliopsida</taxon>
        <taxon>eudicotyledons</taxon>
        <taxon>Gunneridae</taxon>
        <taxon>Pentapetalae</taxon>
        <taxon>rosids</taxon>
        <taxon>fabids</taxon>
        <taxon>Fabales</taxon>
        <taxon>Fabaceae</taxon>
        <taxon>Papilionoideae</taxon>
        <taxon>50 kb inversion clade</taxon>
        <taxon>NPAAA clade</taxon>
        <taxon>indigoferoid/millettioid clade</taxon>
        <taxon>Phaseoleae</taxon>
        <taxon>Glycine</taxon>
        <taxon>Glycine subgen. Soja</taxon>
    </lineage>
</organism>